<reference key="1">
    <citation type="journal article" date="2004" name="Genome Res.">
        <title>The status, quality, and expansion of the NIH full-length cDNA project: the Mammalian Gene Collection (MGC).</title>
        <authorList>
            <consortium name="The MGC Project Team"/>
        </authorList>
    </citation>
    <scope>NUCLEOTIDE SEQUENCE [LARGE SCALE MRNA]</scope>
    <source>
        <tissue>Ovary</tissue>
    </source>
</reference>
<dbReference type="EMBL" id="BC086350">
    <property type="protein sequence ID" value="AAH86350.1"/>
    <property type="molecule type" value="mRNA"/>
</dbReference>
<dbReference type="RefSeq" id="NP_001012054.1">
    <property type="nucleotide sequence ID" value="NM_001012054.1"/>
</dbReference>
<dbReference type="RefSeq" id="XP_006254270.1">
    <property type="nucleotide sequence ID" value="XM_006254208.5"/>
</dbReference>
<dbReference type="RefSeq" id="XP_063132561.1">
    <property type="nucleotide sequence ID" value="XM_063276491.1"/>
</dbReference>
<dbReference type="RefSeq" id="XP_063132562.1">
    <property type="nucleotide sequence ID" value="XM_063276492.1"/>
</dbReference>
<dbReference type="SMR" id="Q5U206"/>
<dbReference type="FunCoup" id="Q5U206">
    <property type="interactions" value="1544"/>
</dbReference>
<dbReference type="STRING" id="10116.ENSRNOP00000043121"/>
<dbReference type="iPTMnet" id="Q5U206"/>
<dbReference type="PhosphoSitePlus" id="Q5U206"/>
<dbReference type="jPOST" id="Q5U206"/>
<dbReference type="PaxDb" id="10116-ENSRNOP00000043121"/>
<dbReference type="Ensembl" id="ENSRNOT00000046667.5">
    <property type="protein sequence ID" value="ENSRNOP00000043121.3"/>
    <property type="gene ID" value="ENSRNOG00000031955.5"/>
</dbReference>
<dbReference type="GeneID" id="307100"/>
<dbReference type="KEGG" id="rno:307100"/>
<dbReference type="UCSC" id="RGD:1305499">
    <property type="organism name" value="rat"/>
</dbReference>
<dbReference type="AGR" id="RGD:1305499"/>
<dbReference type="CTD" id="810"/>
<dbReference type="RGD" id="1305499">
    <property type="gene designation" value="Calml3"/>
</dbReference>
<dbReference type="eggNOG" id="KOG0027">
    <property type="taxonomic scope" value="Eukaryota"/>
</dbReference>
<dbReference type="GeneTree" id="ENSGT00950000182980"/>
<dbReference type="HOGENOM" id="CLU_061288_2_0_1"/>
<dbReference type="InParanoid" id="Q5U206"/>
<dbReference type="OMA" id="CITTHEL"/>
<dbReference type="OrthoDB" id="26525at2759"/>
<dbReference type="PhylomeDB" id="Q5U206"/>
<dbReference type="TreeFam" id="TF300912"/>
<dbReference type="PRO" id="PR:Q5U206"/>
<dbReference type="Proteomes" id="UP000002494">
    <property type="component" value="Chromosome 17"/>
</dbReference>
<dbReference type="Bgee" id="ENSRNOG00000031955">
    <property type="expression patterns" value="Expressed in esophagus and 13 other cell types or tissues"/>
</dbReference>
<dbReference type="GO" id="GO:0005813">
    <property type="term" value="C:centrosome"/>
    <property type="evidence" value="ECO:0000318"/>
    <property type="project" value="GO_Central"/>
</dbReference>
<dbReference type="GO" id="GO:0005737">
    <property type="term" value="C:cytoplasm"/>
    <property type="evidence" value="ECO:0000318"/>
    <property type="project" value="GO_Central"/>
</dbReference>
<dbReference type="GO" id="GO:0150034">
    <property type="term" value="C:distal axon"/>
    <property type="evidence" value="ECO:0007669"/>
    <property type="project" value="UniProtKB-ARBA"/>
</dbReference>
<dbReference type="GO" id="GO:0043209">
    <property type="term" value="C:myelin sheath"/>
    <property type="evidence" value="ECO:0000318"/>
    <property type="project" value="GO_Central"/>
</dbReference>
<dbReference type="GO" id="GO:0005509">
    <property type="term" value="F:calcium ion binding"/>
    <property type="evidence" value="ECO:0000318"/>
    <property type="project" value="GO_Central"/>
</dbReference>
<dbReference type="GO" id="GO:0051649">
    <property type="term" value="P:establishment of localization in cell"/>
    <property type="evidence" value="ECO:0007669"/>
    <property type="project" value="UniProtKB-ARBA"/>
</dbReference>
<dbReference type="CDD" id="cd00051">
    <property type="entry name" value="EFh"/>
    <property type="match status" value="2"/>
</dbReference>
<dbReference type="FunFam" id="1.10.238.10:FF:000006">
    <property type="entry name" value="Calmodulin 1"/>
    <property type="match status" value="1"/>
</dbReference>
<dbReference type="FunFam" id="1.10.238.10:FF:000398">
    <property type="entry name" value="Calmodulin-like protein 3"/>
    <property type="match status" value="1"/>
</dbReference>
<dbReference type="Gene3D" id="1.10.238.10">
    <property type="entry name" value="EF-hand"/>
    <property type="match status" value="3"/>
</dbReference>
<dbReference type="InterPro" id="IPR050230">
    <property type="entry name" value="CALM/Myosin/TropC-like"/>
</dbReference>
<dbReference type="InterPro" id="IPR011992">
    <property type="entry name" value="EF-hand-dom_pair"/>
</dbReference>
<dbReference type="InterPro" id="IPR018247">
    <property type="entry name" value="EF_Hand_1_Ca_BS"/>
</dbReference>
<dbReference type="InterPro" id="IPR002048">
    <property type="entry name" value="EF_hand_dom"/>
</dbReference>
<dbReference type="PANTHER" id="PTHR23048:SF0">
    <property type="entry name" value="CALMODULIN LIKE 3"/>
    <property type="match status" value="1"/>
</dbReference>
<dbReference type="PANTHER" id="PTHR23048">
    <property type="entry name" value="MYOSIN LIGHT CHAIN 1, 3"/>
    <property type="match status" value="1"/>
</dbReference>
<dbReference type="Pfam" id="PF13499">
    <property type="entry name" value="EF-hand_7"/>
    <property type="match status" value="2"/>
</dbReference>
<dbReference type="SMART" id="SM00054">
    <property type="entry name" value="EFh"/>
    <property type="match status" value="4"/>
</dbReference>
<dbReference type="SUPFAM" id="SSF47473">
    <property type="entry name" value="EF-hand"/>
    <property type="match status" value="1"/>
</dbReference>
<dbReference type="PROSITE" id="PS00018">
    <property type="entry name" value="EF_HAND_1"/>
    <property type="match status" value="4"/>
</dbReference>
<dbReference type="PROSITE" id="PS50222">
    <property type="entry name" value="EF_HAND_2"/>
    <property type="match status" value="4"/>
</dbReference>
<accession>Q5U206</accession>
<keyword id="KW-0106">Calcium</keyword>
<keyword id="KW-0479">Metal-binding</keyword>
<keyword id="KW-1185">Reference proteome</keyword>
<keyword id="KW-0677">Repeat</keyword>
<sequence length="149" mass="16803">MANQLTEEQIAEFKEAFSLFDKDGDGCITTQELGTVMRSLGQNPTEAELQDMVNEIDKDGNGTVDFPEFLTMMSRKMKDTDSEEEIREAFRVFDKDGNGFVSAAELRHVMTRLGEKLSDEEVDEMIQAADTDGDGQVNYEEFVHMLVSK</sequence>
<evidence type="ECO:0000250" key="1"/>
<evidence type="ECO:0000255" key="2">
    <source>
        <dbReference type="PROSITE-ProRule" id="PRU00448"/>
    </source>
</evidence>
<evidence type="ECO:0000305" key="3"/>
<gene>
    <name type="primary">Calml3</name>
</gene>
<proteinExistence type="evidence at transcript level"/>
<protein>
    <recommendedName>
        <fullName>Calmodulin-like protein 3</fullName>
    </recommendedName>
</protein>
<name>CALL3_RAT</name>
<comment type="function">
    <text evidence="1">May function as a specific light chain of unconventional myosin-10 (MYO10), also enhances MYO10 translation, possibly by acting as a chaperone for the emerging MYO10 heavy chain protein. May compete with calmodulin by binding, with different affinities, to cellular substrates (By similarity).</text>
</comment>
<comment type="subunit">
    <text evidence="1">Interacts with MYO10, the interaction is calcium-dependent and essential for MYO10 function in filopodial extension.</text>
</comment>
<comment type="miscellaneous">
    <text evidence="1">Binds four calcium ions.</text>
</comment>
<comment type="similarity">
    <text evidence="3">Belongs to the calmodulin family.</text>
</comment>
<feature type="chain" id="PRO_0000284522" description="Calmodulin-like protein 3">
    <location>
        <begin position="1"/>
        <end position="149"/>
    </location>
</feature>
<feature type="domain" description="EF-hand 1" evidence="2">
    <location>
        <begin position="8"/>
        <end position="43"/>
    </location>
</feature>
<feature type="domain" description="EF-hand 2" evidence="2">
    <location>
        <begin position="44"/>
        <end position="79"/>
    </location>
</feature>
<feature type="domain" description="EF-hand 3" evidence="2">
    <location>
        <begin position="81"/>
        <end position="116"/>
    </location>
</feature>
<feature type="domain" description="EF-hand 4" evidence="2">
    <location>
        <begin position="117"/>
        <end position="149"/>
    </location>
</feature>
<feature type="binding site" evidence="2">
    <location>
        <position position="21"/>
    </location>
    <ligand>
        <name>Ca(2+)</name>
        <dbReference type="ChEBI" id="CHEBI:29108"/>
        <label>1</label>
    </ligand>
</feature>
<feature type="binding site" evidence="2">
    <location>
        <position position="23"/>
    </location>
    <ligand>
        <name>Ca(2+)</name>
        <dbReference type="ChEBI" id="CHEBI:29108"/>
        <label>1</label>
    </ligand>
</feature>
<feature type="binding site" evidence="2">
    <location>
        <position position="25"/>
    </location>
    <ligand>
        <name>Ca(2+)</name>
        <dbReference type="ChEBI" id="CHEBI:29108"/>
        <label>1</label>
    </ligand>
</feature>
<feature type="binding site" evidence="2">
    <location>
        <position position="27"/>
    </location>
    <ligand>
        <name>Ca(2+)</name>
        <dbReference type="ChEBI" id="CHEBI:29108"/>
        <label>1</label>
    </ligand>
</feature>
<feature type="binding site" evidence="2">
    <location>
        <position position="32"/>
    </location>
    <ligand>
        <name>Ca(2+)</name>
        <dbReference type="ChEBI" id="CHEBI:29108"/>
        <label>1</label>
    </ligand>
</feature>
<feature type="binding site" evidence="2">
    <location>
        <position position="57"/>
    </location>
    <ligand>
        <name>Ca(2+)</name>
        <dbReference type="ChEBI" id="CHEBI:29108"/>
        <label>2</label>
    </ligand>
</feature>
<feature type="binding site" evidence="2">
    <location>
        <position position="59"/>
    </location>
    <ligand>
        <name>Ca(2+)</name>
        <dbReference type="ChEBI" id="CHEBI:29108"/>
        <label>2</label>
    </ligand>
</feature>
<feature type="binding site" evidence="2">
    <location>
        <position position="61"/>
    </location>
    <ligand>
        <name>Ca(2+)</name>
        <dbReference type="ChEBI" id="CHEBI:29108"/>
        <label>2</label>
    </ligand>
</feature>
<feature type="binding site" evidence="2">
    <location>
        <position position="63"/>
    </location>
    <ligand>
        <name>Ca(2+)</name>
        <dbReference type="ChEBI" id="CHEBI:29108"/>
        <label>2</label>
    </ligand>
</feature>
<feature type="binding site" evidence="2">
    <location>
        <position position="68"/>
    </location>
    <ligand>
        <name>Ca(2+)</name>
        <dbReference type="ChEBI" id="CHEBI:29108"/>
        <label>2</label>
    </ligand>
</feature>
<feature type="binding site" evidence="2">
    <location>
        <position position="94"/>
    </location>
    <ligand>
        <name>Ca(2+)</name>
        <dbReference type="ChEBI" id="CHEBI:29108"/>
        <label>3</label>
    </ligand>
</feature>
<feature type="binding site" evidence="2">
    <location>
        <position position="96"/>
    </location>
    <ligand>
        <name>Ca(2+)</name>
        <dbReference type="ChEBI" id="CHEBI:29108"/>
        <label>3</label>
    </ligand>
</feature>
<feature type="binding site" evidence="2">
    <location>
        <position position="98"/>
    </location>
    <ligand>
        <name>Ca(2+)</name>
        <dbReference type="ChEBI" id="CHEBI:29108"/>
        <label>3</label>
    </ligand>
</feature>
<feature type="binding site" evidence="2">
    <location>
        <position position="105"/>
    </location>
    <ligand>
        <name>Ca(2+)</name>
        <dbReference type="ChEBI" id="CHEBI:29108"/>
        <label>3</label>
    </ligand>
</feature>
<feature type="binding site" evidence="2">
    <location>
        <position position="130"/>
    </location>
    <ligand>
        <name>Ca(2+)</name>
        <dbReference type="ChEBI" id="CHEBI:29108"/>
        <label>4</label>
    </ligand>
</feature>
<feature type="binding site" evidence="2">
    <location>
        <position position="132"/>
    </location>
    <ligand>
        <name>Ca(2+)</name>
        <dbReference type="ChEBI" id="CHEBI:29108"/>
        <label>4</label>
    </ligand>
</feature>
<feature type="binding site" evidence="2">
    <location>
        <position position="134"/>
    </location>
    <ligand>
        <name>Ca(2+)</name>
        <dbReference type="ChEBI" id="CHEBI:29108"/>
        <label>4</label>
    </ligand>
</feature>
<feature type="binding site" evidence="2">
    <location>
        <position position="136"/>
    </location>
    <ligand>
        <name>Ca(2+)</name>
        <dbReference type="ChEBI" id="CHEBI:29108"/>
        <label>4</label>
    </ligand>
</feature>
<feature type="binding site" evidence="2">
    <location>
        <position position="141"/>
    </location>
    <ligand>
        <name>Ca(2+)</name>
        <dbReference type="ChEBI" id="CHEBI:29108"/>
        <label>4</label>
    </ligand>
</feature>
<organism>
    <name type="scientific">Rattus norvegicus</name>
    <name type="common">Rat</name>
    <dbReference type="NCBI Taxonomy" id="10116"/>
    <lineage>
        <taxon>Eukaryota</taxon>
        <taxon>Metazoa</taxon>
        <taxon>Chordata</taxon>
        <taxon>Craniata</taxon>
        <taxon>Vertebrata</taxon>
        <taxon>Euteleostomi</taxon>
        <taxon>Mammalia</taxon>
        <taxon>Eutheria</taxon>
        <taxon>Euarchontoglires</taxon>
        <taxon>Glires</taxon>
        <taxon>Rodentia</taxon>
        <taxon>Myomorpha</taxon>
        <taxon>Muroidea</taxon>
        <taxon>Muridae</taxon>
        <taxon>Murinae</taxon>
        <taxon>Rattus</taxon>
    </lineage>
</organism>